<feature type="chain" id="PRO_1000215352" description="Malate dehydrogenase">
    <location>
        <begin position="1"/>
        <end position="312"/>
    </location>
</feature>
<feature type="active site" description="Proton acceptor" evidence="1">
    <location>
        <position position="177"/>
    </location>
</feature>
<feature type="binding site" evidence="1">
    <location>
        <begin position="7"/>
        <end position="13"/>
    </location>
    <ligand>
        <name>NAD(+)</name>
        <dbReference type="ChEBI" id="CHEBI:57540"/>
    </ligand>
</feature>
<feature type="binding site" evidence="1">
    <location>
        <position position="34"/>
    </location>
    <ligand>
        <name>NAD(+)</name>
        <dbReference type="ChEBI" id="CHEBI:57540"/>
    </ligand>
</feature>
<feature type="binding site" evidence="1">
    <location>
        <position position="81"/>
    </location>
    <ligand>
        <name>substrate</name>
    </ligand>
</feature>
<feature type="binding site" evidence="1">
    <location>
        <position position="87"/>
    </location>
    <ligand>
        <name>substrate</name>
    </ligand>
</feature>
<feature type="binding site" evidence="1">
    <location>
        <position position="94"/>
    </location>
    <ligand>
        <name>NAD(+)</name>
        <dbReference type="ChEBI" id="CHEBI:57540"/>
    </ligand>
</feature>
<feature type="binding site" evidence="1">
    <location>
        <begin position="117"/>
        <end position="119"/>
    </location>
    <ligand>
        <name>NAD(+)</name>
        <dbReference type="ChEBI" id="CHEBI:57540"/>
    </ligand>
</feature>
<feature type="binding site" evidence="1">
    <location>
        <position position="119"/>
    </location>
    <ligand>
        <name>substrate</name>
    </ligand>
</feature>
<feature type="binding site" evidence="1">
    <location>
        <position position="153"/>
    </location>
    <ligand>
        <name>substrate</name>
    </ligand>
</feature>
<feature type="binding site" evidence="1">
    <location>
        <position position="227"/>
    </location>
    <ligand>
        <name>NAD(+)</name>
        <dbReference type="ChEBI" id="CHEBI:57540"/>
    </ligand>
</feature>
<accession>C4ZSX4</accession>
<proteinExistence type="inferred from homology"/>
<evidence type="ECO:0000255" key="1">
    <source>
        <dbReference type="HAMAP-Rule" id="MF_01516"/>
    </source>
</evidence>
<organism>
    <name type="scientific">Escherichia coli (strain K12 / MC4100 / BW2952)</name>
    <dbReference type="NCBI Taxonomy" id="595496"/>
    <lineage>
        <taxon>Bacteria</taxon>
        <taxon>Pseudomonadati</taxon>
        <taxon>Pseudomonadota</taxon>
        <taxon>Gammaproteobacteria</taxon>
        <taxon>Enterobacterales</taxon>
        <taxon>Enterobacteriaceae</taxon>
        <taxon>Escherichia</taxon>
    </lineage>
</organism>
<protein>
    <recommendedName>
        <fullName evidence="1">Malate dehydrogenase</fullName>
        <ecNumber evidence="1">1.1.1.37</ecNumber>
    </recommendedName>
</protein>
<keyword id="KW-0520">NAD</keyword>
<keyword id="KW-0560">Oxidoreductase</keyword>
<keyword id="KW-0816">Tricarboxylic acid cycle</keyword>
<sequence>MKVAVLGAAGGIGQALALLLKTQLPSGSELSLYDIAPVTPGVAVDLSHIPTAVKIKGFSGEDATPALEGADVVLISAGVARKPGMDRSDLFNVNAGIVKNLVQQVAKTCPKACIGIITNPVNTTVAIAAEVLKKAGVYDKNKLFGVTTLDIIRSNTFVAELKGKQPGEVEVPVIGGHSGVTILPLLSQVPGVSFTEQEVADLTKRIQNAGTEVVEAKAGGGSATLSMGQAAARFGLSLVRALQGEQGVVECAYVEGDGQYARFFSQPLLLGKNGVEERKSIGTLSAFEQNALEGMLDTLKKDIALGEEFVNK</sequence>
<dbReference type="EC" id="1.1.1.37" evidence="1"/>
<dbReference type="EMBL" id="CP001396">
    <property type="protein sequence ID" value="ACR63708.1"/>
    <property type="molecule type" value="Genomic_DNA"/>
</dbReference>
<dbReference type="RefSeq" id="WP_001295272.1">
    <property type="nucleotide sequence ID" value="NC_012759.1"/>
</dbReference>
<dbReference type="SMR" id="C4ZSX4"/>
<dbReference type="GeneID" id="93778749"/>
<dbReference type="KEGG" id="ebw:BWG_2937"/>
<dbReference type="HOGENOM" id="CLU_047181_0_1_6"/>
<dbReference type="GO" id="GO:0005737">
    <property type="term" value="C:cytoplasm"/>
    <property type="evidence" value="ECO:0007669"/>
    <property type="project" value="TreeGrafter"/>
</dbReference>
<dbReference type="GO" id="GO:0030060">
    <property type="term" value="F:L-malate dehydrogenase (NAD+) activity"/>
    <property type="evidence" value="ECO:0007669"/>
    <property type="project" value="UniProtKB-UniRule"/>
</dbReference>
<dbReference type="GO" id="GO:0006108">
    <property type="term" value="P:malate metabolic process"/>
    <property type="evidence" value="ECO:0007669"/>
    <property type="project" value="InterPro"/>
</dbReference>
<dbReference type="GO" id="GO:0006099">
    <property type="term" value="P:tricarboxylic acid cycle"/>
    <property type="evidence" value="ECO:0007669"/>
    <property type="project" value="UniProtKB-UniRule"/>
</dbReference>
<dbReference type="CDD" id="cd01337">
    <property type="entry name" value="MDH_glyoxysomal_mitochondrial"/>
    <property type="match status" value="1"/>
</dbReference>
<dbReference type="FunFam" id="3.40.50.720:FF:000017">
    <property type="entry name" value="Malate dehydrogenase"/>
    <property type="match status" value="1"/>
</dbReference>
<dbReference type="FunFam" id="3.90.110.10:FF:000001">
    <property type="entry name" value="Malate dehydrogenase"/>
    <property type="match status" value="1"/>
</dbReference>
<dbReference type="Gene3D" id="3.90.110.10">
    <property type="entry name" value="Lactate dehydrogenase/glycoside hydrolase, family 4, C-terminal"/>
    <property type="match status" value="1"/>
</dbReference>
<dbReference type="Gene3D" id="3.40.50.720">
    <property type="entry name" value="NAD(P)-binding Rossmann-like Domain"/>
    <property type="match status" value="1"/>
</dbReference>
<dbReference type="HAMAP" id="MF_01516">
    <property type="entry name" value="Malate_dehydrog_1"/>
    <property type="match status" value="1"/>
</dbReference>
<dbReference type="InterPro" id="IPR001557">
    <property type="entry name" value="L-lactate/malate_DH"/>
</dbReference>
<dbReference type="InterPro" id="IPR022383">
    <property type="entry name" value="Lactate/malate_DH_C"/>
</dbReference>
<dbReference type="InterPro" id="IPR001236">
    <property type="entry name" value="Lactate/malate_DH_N"/>
</dbReference>
<dbReference type="InterPro" id="IPR015955">
    <property type="entry name" value="Lactate_DH/Glyco_Ohase_4_C"/>
</dbReference>
<dbReference type="InterPro" id="IPR001252">
    <property type="entry name" value="Malate_DH_AS"/>
</dbReference>
<dbReference type="InterPro" id="IPR010097">
    <property type="entry name" value="Malate_DH_type1"/>
</dbReference>
<dbReference type="InterPro" id="IPR023958">
    <property type="entry name" value="Malate_DH_type1_bac"/>
</dbReference>
<dbReference type="InterPro" id="IPR036291">
    <property type="entry name" value="NAD(P)-bd_dom_sf"/>
</dbReference>
<dbReference type="NCBIfam" id="TIGR01772">
    <property type="entry name" value="MDH_euk_gproteo"/>
    <property type="match status" value="1"/>
</dbReference>
<dbReference type="PANTHER" id="PTHR11540">
    <property type="entry name" value="MALATE AND LACTATE DEHYDROGENASE"/>
    <property type="match status" value="1"/>
</dbReference>
<dbReference type="PANTHER" id="PTHR11540:SF16">
    <property type="entry name" value="MALATE DEHYDROGENASE, MITOCHONDRIAL"/>
    <property type="match status" value="1"/>
</dbReference>
<dbReference type="Pfam" id="PF02866">
    <property type="entry name" value="Ldh_1_C"/>
    <property type="match status" value="1"/>
</dbReference>
<dbReference type="Pfam" id="PF00056">
    <property type="entry name" value="Ldh_1_N"/>
    <property type="match status" value="1"/>
</dbReference>
<dbReference type="PIRSF" id="PIRSF000102">
    <property type="entry name" value="Lac_mal_DH"/>
    <property type="match status" value="1"/>
</dbReference>
<dbReference type="SUPFAM" id="SSF56327">
    <property type="entry name" value="LDH C-terminal domain-like"/>
    <property type="match status" value="1"/>
</dbReference>
<dbReference type="SUPFAM" id="SSF51735">
    <property type="entry name" value="NAD(P)-binding Rossmann-fold domains"/>
    <property type="match status" value="1"/>
</dbReference>
<dbReference type="PROSITE" id="PS00068">
    <property type="entry name" value="MDH"/>
    <property type="match status" value="1"/>
</dbReference>
<gene>
    <name evidence="1" type="primary">mdh</name>
    <name type="ordered locus">BWG_2937</name>
</gene>
<name>MDH_ECOBW</name>
<comment type="function">
    <text evidence="1">Catalyzes the reversible oxidation of malate to oxaloacetate.</text>
</comment>
<comment type="catalytic activity">
    <reaction evidence="1">
        <text>(S)-malate + NAD(+) = oxaloacetate + NADH + H(+)</text>
        <dbReference type="Rhea" id="RHEA:21432"/>
        <dbReference type="ChEBI" id="CHEBI:15378"/>
        <dbReference type="ChEBI" id="CHEBI:15589"/>
        <dbReference type="ChEBI" id="CHEBI:16452"/>
        <dbReference type="ChEBI" id="CHEBI:57540"/>
        <dbReference type="ChEBI" id="CHEBI:57945"/>
        <dbReference type="EC" id="1.1.1.37"/>
    </reaction>
</comment>
<comment type="subunit">
    <text evidence="1">Homodimer.</text>
</comment>
<comment type="similarity">
    <text evidence="1">Belongs to the LDH/MDH superfamily. MDH type 1 family.</text>
</comment>
<reference key="1">
    <citation type="journal article" date="2009" name="J. Bacteriol.">
        <title>Genomic sequencing reveals regulatory mutations and recombinational events in the widely used MC4100 lineage of Escherichia coli K-12.</title>
        <authorList>
            <person name="Ferenci T."/>
            <person name="Zhou Z."/>
            <person name="Betteridge T."/>
            <person name="Ren Y."/>
            <person name="Liu Y."/>
            <person name="Feng L."/>
            <person name="Reeves P.R."/>
            <person name="Wang L."/>
        </authorList>
    </citation>
    <scope>NUCLEOTIDE SEQUENCE [LARGE SCALE GENOMIC DNA]</scope>
    <source>
        <strain>K12 / MC4100 / BW2952</strain>
    </source>
</reference>